<proteinExistence type="inferred from homology"/>
<reference key="1">
    <citation type="journal article" date="2009" name="BMC Genomics">
        <title>Metabolic analysis of the soil microbe Dechloromonas aromatica str. RCB: indications of a surprisingly complex life-style and cryptic anaerobic pathways for aromatic degradation.</title>
        <authorList>
            <person name="Salinero K.K."/>
            <person name="Keller K."/>
            <person name="Feil W.S."/>
            <person name="Feil H."/>
            <person name="Trong S."/>
            <person name="Di Bartolo G."/>
            <person name="Lapidus A."/>
        </authorList>
    </citation>
    <scope>NUCLEOTIDE SEQUENCE [LARGE SCALE GENOMIC DNA]</scope>
    <source>
        <strain>RCB</strain>
    </source>
</reference>
<feature type="chain" id="PRO_0000256901" description="Chaperonin GroEL">
    <location>
        <begin position="1"/>
        <end position="550"/>
    </location>
</feature>
<feature type="binding site" evidence="1">
    <location>
        <begin position="30"/>
        <end position="33"/>
    </location>
    <ligand>
        <name>ATP</name>
        <dbReference type="ChEBI" id="CHEBI:30616"/>
    </ligand>
</feature>
<feature type="binding site" evidence="1">
    <location>
        <position position="51"/>
    </location>
    <ligand>
        <name>ATP</name>
        <dbReference type="ChEBI" id="CHEBI:30616"/>
    </ligand>
</feature>
<feature type="binding site" evidence="1">
    <location>
        <begin position="87"/>
        <end position="91"/>
    </location>
    <ligand>
        <name>ATP</name>
        <dbReference type="ChEBI" id="CHEBI:30616"/>
    </ligand>
</feature>
<feature type="binding site" evidence="1">
    <location>
        <position position="415"/>
    </location>
    <ligand>
        <name>ATP</name>
        <dbReference type="ChEBI" id="CHEBI:30616"/>
    </ligand>
</feature>
<feature type="binding site" evidence="1">
    <location>
        <position position="495"/>
    </location>
    <ligand>
        <name>ATP</name>
        <dbReference type="ChEBI" id="CHEBI:30616"/>
    </ligand>
</feature>
<accession>Q47IZ8</accession>
<organism>
    <name type="scientific">Dechloromonas aromatica (strain RCB)</name>
    <dbReference type="NCBI Taxonomy" id="159087"/>
    <lineage>
        <taxon>Bacteria</taxon>
        <taxon>Pseudomonadati</taxon>
        <taxon>Pseudomonadota</taxon>
        <taxon>Betaproteobacteria</taxon>
        <taxon>Rhodocyclales</taxon>
        <taxon>Azonexaceae</taxon>
        <taxon>Dechloromonas</taxon>
    </lineage>
</organism>
<protein>
    <recommendedName>
        <fullName evidence="1">Chaperonin GroEL</fullName>
        <ecNumber evidence="1">5.6.1.7</ecNumber>
    </recommendedName>
    <alternativeName>
        <fullName evidence="1">60 kDa chaperonin</fullName>
    </alternativeName>
    <alternativeName>
        <fullName evidence="1">Chaperonin-60</fullName>
        <shortName evidence="1">Cpn60</shortName>
    </alternativeName>
</protein>
<gene>
    <name evidence="1" type="primary">groEL</name>
    <name evidence="1" type="synonym">groL</name>
    <name type="ordered locus">Daro_0426</name>
</gene>
<name>CH60_DECAR</name>
<dbReference type="EC" id="5.6.1.7" evidence="1"/>
<dbReference type="EMBL" id="CP000089">
    <property type="protein sequence ID" value="AAZ45183.1"/>
    <property type="molecule type" value="Genomic_DNA"/>
</dbReference>
<dbReference type="SMR" id="Q47IZ8"/>
<dbReference type="STRING" id="159087.Daro_0426"/>
<dbReference type="KEGG" id="dar:Daro_0426"/>
<dbReference type="eggNOG" id="COG0459">
    <property type="taxonomic scope" value="Bacteria"/>
</dbReference>
<dbReference type="HOGENOM" id="CLU_016503_3_0_4"/>
<dbReference type="OrthoDB" id="9766614at2"/>
<dbReference type="GO" id="GO:0005737">
    <property type="term" value="C:cytoplasm"/>
    <property type="evidence" value="ECO:0007669"/>
    <property type="project" value="UniProtKB-SubCell"/>
</dbReference>
<dbReference type="GO" id="GO:0005524">
    <property type="term" value="F:ATP binding"/>
    <property type="evidence" value="ECO:0007669"/>
    <property type="project" value="UniProtKB-UniRule"/>
</dbReference>
<dbReference type="GO" id="GO:0140662">
    <property type="term" value="F:ATP-dependent protein folding chaperone"/>
    <property type="evidence" value="ECO:0007669"/>
    <property type="project" value="InterPro"/>
</dbReference>
<dbReference type="GO" id="GO:0016853">
    <property type="term" value="F:isomerase activity"/>
    <property type="evidence" value="ECO:0007669"/>
    <property type="project" value="UniProtKB-KW"/>
</dbReference>
<dbReference type="GO" id="GO:0051082">
    <property type="term" value="F:unfolded protein binding"/>
    <property type="evidence" value="ECO:0007669"/>
    <property type="project" value="UniProtKB-UniRule"/>
</dbReference>
<dbReference type="GO" id="GO:0042026">
    <property type="term" value="P:protein refolding"/>
    <property type="evidence" value="ECO:0007669"/>
    <property type="project" value="UniProtKB-UniRule"/>
</dbReference>
<dbReference type="CDD" id="cd03344">
    <property type="entry name" value="GroEL"/>
    <property type="match status" value="1"/>
</dbReference>
<dbReference type="FunFam" id="1.10.560.10:FF:000001">
    <property type="entry name" value="60 kDa chaperonin"/>
    <property type="match status" value="1"/>
</dbReference>
<dbReference type="FunFam" id="3.50.7.10:FF:000001">
    <property type="entry name" value="60 kDa chaperonin"/>
    <property type="match status" value="1"/>
</dbReference>
<dbReference type="Gene3D" id="3.50.7.10">
    <property type="entry name" value="GroEL"/>
    <property type="match status" value="1"/>
</dbReference>
<dbReference type="Gene3D" id="1.10.560.10">
    <property type="entry name" value="GroEL-like equatorial domain"/>
    <property type="match status" value="1"/>
</dbReference>
<dbReference type="Gene3D" id="3.30.260.10">
    <property type="entry name" value="TCP-1-like chaperonin intermediate domain"/>
    <property type="match status" value="1"/>
</dbReference>
<dbReference type="HAMAP" id="MF_00600">
    <property type="entry name" value="CH60"/>
    <property type="match status" value="1"/>
</dbReference>
<dbReference type="InterPro" id="IPR018370">
    <property type="entry name" value="Chaperonin_Cpn60_CS"/>
</dbReference>
<dbReference type="InterPro" id="IPR001844">
    <property type="entry name" value="Cpn60/GroEL"/>
</dbReference>
<dbReference type="InterPro" id="IPR002423">
    <property type="entry name" value="Cpn60/GroEL/TCP-1"/>
</dbReference>
<dbReference type="InterPro" id="IPR027409">
    <property type="entry name" value="GroEL-like_apical_dom_sf"/>
</dbReference>
<dbReference type="InterPro" id="IPR027413">
    <property type="entry name" value="GROEL-like_equatorial_sf"/>
</dbReference>
<dbReference type="InterPro" id="IPR027410">
    <property type="entry name" value="TCP-1-like_intermed_sf"/>
</dbReference>
<dbReference type="NCBIfam" id="TIGR02348">
    <property type="entry name" value="GroEL"/>
    <property type="match status" value="1"/>
</dbReference>
<dbReference type="NCBIfam" id="NF000592">
    <property type="entry name" value="PRK00013.1"/>
    <property type="match status" value="1"/>
</dbReference>
<dbReference type="NCBIfam" id="NF009487">
    <property type="entry name" value="PRK12849.1"/>
    <property type="match status" value="1"/>
</dbReference>
<dbReference type="NCBIfam" id="NF009488">
    <property type="entry name" value="PRK12850.1"/>
    <property type="match status" value="1"/>
</dbReference>
<dbReference type="NCBIfam" id="NF009489">
    <property type="entry name" value="PRK12851.1"/>
    <property type="match status" value="1"/>
</dbReference>
<dbReference type="PANTHER" id="PTHR45633">
    <property type="entry name" value="60 KDA HEAT SHOCK PROTEIN, MITOCHONDRIAL"/>
    <property type="match status" value="1"/>
</dbReference>
<dbReference type="Pfam" id="PF00118">
    <property type="entry name" value="Cpn60_TCP1"/>
    <property type="match status" value="1"/>
</dbReference>
<dbReference type="PRINTS" id="PR00298">
    <property type="entry name" value="CHAPERONIN60"/>
</dbReference>
<dbReference type="SUPFAM" id="SSF52029">
    <property type="entry name" value="GroEL apical domain-like"/>
    <property type="match status" value="1"/>
</dbReference>
<dbReference type="SUPFAM" id="SSF48592">
    <property type="entry name" value="GroEL equatorial domain-like"/>
    <property type="match status" value="1"/>
</dbReference>
<dbReference type="SUPFAM" id="SSF54849">
    <property type="entry name" value="GroEL-intermediate domain like"/>
    <property type="match status" value="1"/>
</dbReference>
<dbReference type="PROSITE" id="PS00296">
    <property type="entry name" value="CHAPERONINS_CPN60"/>
    <property type="match status" value="1"/>
</dbReference>
<evidence type="ECO:0000255" key="1">
    <source>
        <dbReference type="HAMAP-Rule" id="MF_00600"/>
    </source>
</evidence>
<sequence length="550" mass="57850">MAAKEVKFGDSARARMVEGINILADAVKVTLGPKGRNVVLERSFGGPTVTKDGVSVAKEIELKDKFANMGAQMVKEVASKTSDIAGDGTTTATVLAQSIVREGMKFVAAGMNPMDLKRGIDKAVVATIAELQAFSKPCTTTKEIAQVGSISANSDSDIGEIIANAMEKVGKEGVITVEDGKSLANELDVVEGMQFDRGYLSPYFINNGDKQQALLENPFVLLFDKKISNIRDLLPILEQVAKAGRPLLIIAEDVDGEALATLVVNNIRGILKTVAVKAPGFGDRRKAMLEDIAILTGGTVIAEETGLTLEKAVLKDLGQAKRIEVAKENTTIIDGAGEAAAIEARVKQIRIQIEEATSDYDKEKLQERVAKLAGGVAVIKVGAATEVEMKEKKARVEDALHATRAAVEEGIVAGGGVALIRARAAVGKLKGDNHDQDAGIKIVLRAMEQPLREIVANAGDEPSVVVDKVQRGKGNYGYNASTGEYGDMVEMGVLDPTKVTRTALQNAASVAGLMLTTECMVAELAEDKPAGGMPDMGGMGGMGGMGGMGM</sequence>
<comment type="function">
    <text evidence="1">Together with its co-chaperonin GroES, plays an essential role in assisting protein folding. The GroEL-GroES system forms a nano-cage that allows encapsulation of the non-native substrate proteins and provides a physical environment optimized to promote and accelerate protein folding.</text>
</comment>
<comment type="catalytic activity">
    <reaction evidence="1">
        <text>ATP + H2O + a folded polypeptide = ADP + phosphate + an unfolded polypeptide.</text>
        <dbReference type="EC" id="5.6.1.7"/>
    </reaction>
</comment>
<comment type="subunit">
    <text evidence="1">Forms a cylinder of 14 subunits composed of two heptameric rings stacked back-to-back. Interacts with the co-chaperonin GroES.</text>
</comment>
<comment type="subcellular location">
    <subcellularLocation>
        <location evidence="1">Cytoplasm</location>
    </subcellularLocation>
</comment>
<comment type="similarity">
    <text evidence="1">Belongs to the chaperonin (HSP60) family.</text>
</comment>
<keyword id="KW-0067">ATP-binding</keyword>
<keyword id="KW-0143">Chaperone</keyword>
<keyword id="KW-0963">Cytoplasm</keyword>
<keyword id="KW-0413">Isomerase</keyword>
<keyword id="KW-0547">Nucleotide-binding</keyword>